<comment type="function">
    <text evidence="1">One of two assembly initiator proteins, it binds directly to the 5'-end of the 23S rRNA, where it nucleates assembly of the 50S subunit.</text>
</comment>
<comment type="subunit">
    <text evidence="1">Part of the 50S ribosomal subunit.</text>
</comment>
<comment type="subcellular location">
    <subcellularLocation>
        <location>Plastid</location>
        <location>Chloroplast</location>
    </subcellularLocation>
</comment>
<comment type="similarity">
    <text evidence="2">Belongs to the universal ribosomal protein uL24 family.</text>
</comment>
<accession>Q85FV2</accession>
<dbReference type="EMBL" id="AB002583">
    <property type="protein sequence ID" value="BAC76242.1"/>
    <property type="molecule type" value="Genomic_DNA"/>
</dbReference>
<dbReference type="RefSeq" id="NP_849080.1">
    <property type="nucleotide sequence ID" value="NC_004799.1"/>
</dbReference>
<dbReference type="SMR" id="Q85FV2"/>
<dbReference type="STRING" id="280699.Q85FV2"/>
<dbReference type="EnsemblPlants" id="CMV175CT">
    <property type="protein sequence ID" value="CMV175CT"/>
    <property type="gene ID" value="CMV175C"/>
</dbReference>
<dbReference type="GeneID" id="844980"/>
<dbReference type="Gramene" id="CMV175CT">
    <property type="protein sequence ID" value="CMV175CT"/>
    <property type="gene ID" value="CMV175C"/>
</dbReference>
<dbReference type="KEGG" id="cme:CymeCp148"/>
<dbReference type="eggNOG" id="KOG1708">
    <property type="taxonomic scope" value="Eukaryota"/>
</dbReference>
<dbReference type="HOGENOM" id="CLU_093315_3_0_1"/>
<dbReference type="Proteomes" id="UP000007014">
    <property type="component" value="Chloroplast"/>
</dbReference>
<dbReference type="GO" id="GO:0009507">
    <property type="term" value="C:chloroplast"/>
    <property type="evidence" value="ECO:0007669"/>
    <property type="project" value="UniProtKB-SubCell"/>
</dbReference>
<dbReference type="GO" id="GO:1990904">
    <property type="term" value="C:ribonucleoprotein complex"/>
    <property type="evidence" value="ECO:0007669"/>
    <property type="project" value="UniProtKB-KW"/>
</dbReference>
<dbReference type="GO" id="GO:0005840">
    <property type="term" value="C:ribosome"/>
    <property type="evidence" value="ECO:0007669"/>
    <property type="project" value="UniProtKB-KW"/>
</dbReference>
<dbReference type="GO" id="GO:0019843">
    <property type="term" value="F:rRNA binding"/>
    <property type="evidence" value="ECO:0007669"/>
    <property type="project" value="UniProtKB-UniRule"/>
</dbReference>
<dbReference type="GO" id="GO:0003735">
    <property type="term" value="F:structural constituent of ribosome"/>
    <property type="evidence" value="ECO:0007669"/>
    <property type="project" value="InterPro"/>
</dbReference>
<dbReference type="GO" id="GO:0006412">
    <property type="term" value="P:translation"/>
    <property type="evidence" value="ECO:0007669"/>
    <property type="project" value="UniProtKB-UniRule"/>
</dbReference>
<dbReference type="CDD" id="cd06089">
    <property type="entry name" value="KOW_RPL26"/>
    <property type="match status" value="1"/>
</dbReference>
<dbReference type="Gene3D" id="2.30.30.30">
    <property type="match status" value="1"/>
</dbReference>
<dbReference type="HAMAP" id="MF_01326_B">
    <property type="entry name" value="Ribosomal_uL24_B"/>
    <property type="match status" value="1"/>
</dbReference>
<dbReference type="InterPro" id="IPR005824">
    <property type="entry name" value="KOW"/>
</dbReference>
<dbReference type="InterPro" id="IPR014722">
    <property type="entry name" value="Rib_uL2_dom2"/>
</dbReference>
<dbReference type="InterPro" id="IPR003256">
    <property type="entry name" value="Ribosomal_uL24"/>
</dbReference>
<dbReference type="InterPro" id="IPR041988">
    <property type="entry name" value="Ribosomal_uL24_KOW"/>
</dbReference>
<dbReference type="InterPro" id="IPR008991">
    <property type="entry name" value="Translation_prot_SH3-like_sf"/>
</dbReference>
<dbReference type="NCBIfam" id="TIGR01079">
    <property type="entry name" value="rplX_bact"/>
    <property type="match status" value="1"/>
</dbReference>
<dbReference type="PANTHER" id="PTHR12903">
    <property type="entry name" value="MITOCHONDRIAL RIBOSOMAL PROTEIN L24"/>
    <property type="match status" value="1"/>
</dbReference>
<dbReference type="Pfam" id="PF00467">
    <property type="entry name" value="KOW"/>
    <property type="match status" value="1"/>
</dbReference>
<dbReference type="Pfam" id="PF17136">
    <property type="entry name" value="ribosomal_L24"/>
    <property type="match status" value="1"/>
</dbReference>
<dbReference type="SMART" id="SM00739">
    <property type="entry name" value="KOW"/>
    <property type="match status" value="1"/>
</dbReference>
<dbReference type="SUPFAM" id="SSF50104">
    <property type="entry name" value="Translation proteins SH3-like domain"/>
    <property type="match status" value="1"/>
</dbReference>
<name>RK24_CYAM1</name>
<proteinExistence type="inferred from homology"/>
<keyword id="KW-0150">Chloroplast</keyword>
<keyword id="KW-0934">Plastid</keyword>
<keyword id="KW-1185">Reference proteome</keyword>
<keyword id="KW-0687">Ribonucleoprotein</keyword>
<keyword id="KW-0689">Ribosomal protein</keyword>
<keyword id="KW-0694">RNA-binding</keyword>
<keyword id="KW-0699">rRNA-binding</keyword>
<organism>
    <name type="scientific">Cyanidioschyzon merolae (strain NIES-3377 / 10D)</name>
    <name type="common">Unicellular red alga</name>
    <dbReference type="NCBI Taxonomy" id="280699"/>
    <lineage>
        <taxon>Eukaryota</taxon>
        <taxon>Rhodophyta</taxon>
        <taxon>Bangiophyceae</taxon>
        <taxon>Cyanidiales</taxon>
        <taxon>Cyanidiaceae</taxon>
        <taxon>Cyanidioschyzon</taxon>
    </lineage>
</organism>
<sequence>MKNTIKKGNQVLVLSGNSKGQIGEVLVIDRKRKQLVVKGINQKTKHMKPKRQGEVGQIIRREYPIHMSQVRLWNG</sequence>
<gene>
    <name type="primary">rpl24</name>
</gene>
<evidence type="ECO:0000250" key="1"/>
<evidence type="ECO:0000305" key="2"/>
<protein>
    <recommendedName>
        <fullName evidence="2">Large ribosomal subunit protein uL24c</fullName>
    </recommendedName>
    <alternativeName>
        <fullName>50S ribosomal protein L24, chloroplastic</fullName>
    </alternativeName>
</protein>
<reference key="1">
    <citation type="journal article" date="2003" name="DNA Res.">
        <title>Complete sequence and analysis of the plastid genome of the unicellular red alga Cyanidioschyzon merolae.</title>
        <authorList>
            <person name="Ohta N."/>
            <person name="Matsuzaki M."/>
            <person name="Misumi O."/>
            <person name="Miyagishima S.-Y."/>
            <person name="Nozaki H."/>
            <person name="Tanaka K."/>
            <person name="Shin-i T."/>
            <person name="Kohara Y."/>
            <person name="Kuroiwa T."/>
        </authorList>
    </citation>
    <scope>NUCLEOTIDE SEQUENCE [LARGE SCALE GENOMIC DNA]</scope>
    <source>
        <strain>NIES-3377 / 10D</strain>
    </source>
</reference>
<geneLocation type="chloroplast"/>
<feature type="chain" id="PRO_0000130760" description="Large ribosomal subunit protein uL24c">
    <location>
        <begin position="1"/>
        <end position="75"/>
    </location>
</feature>